<evidence type="ECO:0000269" key="1">
    <source>
    </source>
</evidence>
<evidence type="ECO:0000303" key="2">
    <source>
    </source>
</evidence>
<evidence type="ECO:0000305" key="3"/>
<evidence type="ECO:0000305" key="4">
    <source>
    </source>
</evidence>
<organism>
    <name type="scientific">Pelophylax lessonae</name>
    <name type="common">Pool frog</name>
    <name type="synonym">Rana lessonae</name>
    <dbReference type="NCBI Taxonomy" id="45623"/>
    <lineage>
        <taxon>Eukaryota</taxon>
        <taxon>Metazoa</taxon>
        <taxon>Chordata</taxon>
        <taxon>Craniata</taxon>
        <taxon>Vertebrata</taxon>
        <taxon>Euteleostomi</taxon>
        <taxon>Amphibia</taxon>
        <taxon>Batrachia</taxon>
        <taxon>Anura</taxon>
        <taxon>Neobatrachia</taxon>
        <taxon>Ranoidea</taxon>
        <taxon>Ranidae</taxon>
        <taxon>Pelophylax</taxon>
    </lineage>
</organism>
<proteinExistence type="evidence at protein level"/>
<feature type="peptide" id="PRO_0000043537" description="Brevinin-2Ed" evidence="1">
    <location>
        <begin position="1"/>
        <end position="29"/>
    </location>
</feature>
<feature type="disulfide bond" evidence="1">
    <location>
        <begin position="23"/>
        <end position="29"/>
    </location>
</feature>
<accession>P40840</accession>
<reference key="1">
    <citation type="journal article" date="1994" name="J. Biol. Chem.">
        <title>Antimicrobial peptides from skin secretions of Rana esculenta. Molecular cloning of cDNAs encoding esculentin and brevinins and isolation of new active peptides.</title>
        <authorList>
            <person name="Simmaco M."/>
            <person name="Mignogna G."/>
            <person name="Barra D."/>
            <person name="Bossa F."/>
        </authorList>
    </citation>
    <scope>PROTEIN SEQUENCE</scope>
    <scope>DISULFIDE BOND</scope>
    <scope>SUBCELLULAR LOCATION</scope>
    <source>
        <tissue>Skin secretion</tissue>
    </source>
</reference>
<keyword id="KW-0878">Amphibian defense peptide</keyword>
<keyword id="KW-0044">Antibiotic</keyword>
<keyword id="KW-0929">Antimicrobial</keyword>
<keyword id="KW-0204">Cytolysis</keyword>
<keyword id="KW-0903">Direct protein sequencing</keyword>
<keyword id="KW-1015">Disulfide bond</keyword>
<keyword id="KW-0354">Hemolysis</keyword>
<keyword id="KW-0964">Secreted</keyword>
<sequence length="29" mass="3002">GILDSLKNLAKNAGQILLNKASCKLSGQC</sequence>
<name>BR2D_PELLE</name>
<comment type="function">
    <text>Shows antibacterial activity against representative Gram-negative and Gram-positive bacterial species, and hemolytic activity.</text>
</comment>
<comment type="subcellular location">
    <subcellularLocation>
        <location evidence="1">Secreted</location>
    </subcellularLocation>
</comment>
<comment type="tissue specificity">
    <text evidence="4">Expressed by the skin glands.</text>
</comment>
<comment type="similarity">
    <text evidence="3">Belongs to the frog skin active peptide (FSAP) family. Brevinin subfamily.</text>
</comment>
<comment type="online information" name="The antimicrobial peptide database">
    <link uri="https://wangapd3.com/database/query_output.php?ID=00079"/>
</comment>
<protein>
    <recommendedName>
        <fullName evidence="2">Brevinin-2Ed</fullName>
    </recommendedName>
</protein>
<dbReference type="PIR" id="D55998">
    <property type="entry name" value="D55998"/>
</dbReference>
<dbReference type="SMR" id="P40840"/>
<dbReference type="GO" id="GO:0005576">
    <property type="term" value="C:extracellular region"/>
    <property type="evidence" value="ECO:0007669"/>
    <property type="project" value="UniProtKB-SubCell"/>
</dbReference>
<dbReference type="GO" id="GO:0042742">
    <property type="term" value="P:defense response to bacterium"/>
    <property type="evidence" value="ECO:0007669"/>
    <property type="project" value="UniProtKB-KW"/>
</dbReference>
<dbReference type="GO" id="GO:0031640">
    <property type="term" value="P:killing of cells of another organism"/>
    <property type="evidence" value="ECO:0007669"/>
    <property type="project" value="UniProtKB-KW"/>
</dbReference>
<dbReference type="InterPro" id="IPR012521">
    <property type="entry name" value="Antimicrobial_frog_2"/>
</dbReference>
<dbReference type="Pfam" id="PF08023">
    <property type="entry name" value="Antimicrobial_2"/>
    <property type="match status" value="1"/>
</dbReference>